<reference key="1">
    <citation type="journal article" date="2009" name="PLoS Genet.">
        <title>Organised genome dynamics in the Escherichia coli species results in highly diverse adaptive paths.</title>
        <authorList>
            <person name="Touchon M."/>
            <person name="Hoede C."/>
            <person name="Tenaillon O."/>
            <person name="Barbe V."/>
            <person name="Baeriswyl S."/>
            <person name="Bidet P."/>
            <person name="Bingen E."/>
            <person name="Bonacorsi S."/>
            <person name="Bouchier C."/>
            <person name="Bouvet O."/>
            <person name="Calteau A."/>
            <person name="Chiapello H."/>
            <person name="Clermont O."/>
            <person name="Cruveiller S."/>
            <person name="Danchin A."/>
            <person name="Diard M."/>
            <person name="Dossat C."/>
            <person name="Karoui M.E."/>
            <person name="Frapy E."/>
            <person name="Garry L."/>
            <person name="Ghigo J.M."/>
            <person name="Gilles A.M."/>
            <person name="Johnson J."/>
            <person name="Le Bouguenec C."/>
            <person name="Lescat M."/>
            <person name="Mangenot S."/>
            <person name="Martinez-Jehanne V."/>
            <person name="Matic I."/>
            <person name="Nassif X."/>
            <person name="Oztas S."/>
            <person name="Petit M.A."/>
            <person name="Pichon C."/>
            <person name="Rouy Z."/>
            <person name="Ruf C.S."/>
            <person name="Schneider D."/>
            <person name="Tourret J."/>
            <person name="Vacherie B."/>
            <person name="Vallenet D."/>
            <person name="Medigue C."/>
            <person name="Rocha E.P.C."/>
            <person name="Denamur E."/>
        </authorList>
    </citation>
    <scope>NUCLEOTIDE SEQUENCE [LARGE SCALE GENOMIC DNA]</scope>
    <source>
        <strain>UMN026 / ExPEC</strain>
    </source>
</reference>
<sequence length="310" mass="33580">MVKVYAPASSANMSVGFDVLGAAVTPVDGALLGDVVTVEAAETFSLNNLGRFADKLPSEPRENIVYQCWERFCQELGKQIPVAMALEKNMPIGSGLGSSACSVVAALMAMNEHCGKPLNDTRLLALMGELEGRISGSIHYDNVAPCFLGGMQLMIEENDIISQQVPGFDEWLWVLAYPGIKVSTAEARAILPAQYRRQDCIAHGRHLAGFIHACYSRQPELAAKLMKDVIAEPYRERLLPGFRQARQAVAEIGAVASGISGSGPTLFALCDKPDTAQRVADWLGKNYLQNQEGFVHICRLDTAGARVLEN</sequence>
<proteinExistence type="inferred from homology"/>
<keyword id="KW-0028">Amino-acid biosynthesis</keyword>
<keyword id="KW-0067">ATP-binding</keyword>
<keyword id="KW-0963">Cytoplasm</keyword>
<keyword id="KW-0418">Kinase</keyword>
<keyword id="KW-0547">Nucleotide-binding</keyword>
<keyword id="KW-0791">Threonine biosynthesis</keyword>
<keyword id="KW-0808">Transferase</keyword>
<name>KHSE_ECOLU</name>
<feature type="chain" id="PRO_1000122421" description="Homoserine kinase">
    <location>
        <begin position="1"/>
        <end position="310"/>
    </location>
</feature>
<feature type="binding site" evidence="1">
    <location>
        <begin position="91"/>
        <end position="101"/>
    </location>
    <ligand>
        <name>ATP</name>
        <dbReference type="ChEBI" id="CHEBI:30616"/>
    </ligand>
</feature>
<protein>
    <recommendedName>
        <fullName evidence="1">Homoserine kinase</fullName>
        <shortName evidence="1">HK</shortName>
        <shortName evidence="1">HSK</shortName>
        <ecNumber evidence="1">2.7.1.39</ecNumber>
    </recommendedName>
</protein>
<gene>
    <name evidence="1" type="primary">thrB</name>
    <name type="ordered locus">ECUMN_0003</name>
</gene>
<evidence type="ECO:0000255" key="1">
    <source>
        <dbReference type="HAMAP-Rule" id="MF_00384"/>
    </source>
</evidence>
<accession>B7N7M8</accession>
<dbReference type="EC" id="2.7.1.39" evidence="1"/>
<dbReference type="EMBL" id="CU928163">
    <property type="protein sequence ID" value="CAR11228.1"/>
    <property type="molecule type" value="Genomic_DNA"/>
</dbReference>
<dbReference type="RefSeq" id="WP_000241652.1">
    <property type="nucleotide sequence ID" value="NC_011751.1"/>
</dbReference>
<dbReference type="RefSeq" id="YP_002410783.1">
    <property type="nucleotide sequence ID" value="NC_011751.1"/>
</dbReference>
<dbReference type="SMR" id="B7N7M8"/>
<dbReference type="STRING" id="585056.ECUMN_0003"/>
<dbReference type="KEGG" id="eum:ECUMN_0003"/>
<dbReference type="PATRIC" id="fig|585056.7.peg.187"/>
<dbReference type="HOGENOM" id="CLU_041243_1_1_6"/>
<dbReference type="UniPathway" id="UPA00050">
    <property type="reaction ID" value="UER00064"/>
</dbReference>
<dbReference type="Proteomes" id="UP000007097">
    <property type="component" value="Chromosome"/>
</dbReference>
<dbReference type="GO" id="GO:0005737">
    <property type="term" value="C:cytoplasm"/>
    <property type="evidence" value="ECO:0007669"/>
    <property type="project" value="UniProtKB-SubCell"/>
</dbReference>
<dbReference type="GO" id="GO:0005524">
    <property type="term" value="F:ATP binding"/>
    <property type="evidence" value="ECO:0007669"/>
    <property type="project" value="UniProtKB-UniRule"/>
</dbReference>
<dbReference type="GO" id="GO:0004413">
    <property type="term" value="F:homoserine kinase activity"/>
    <property type="evidence" value="ECO:0007669"/>
    <property type="project" value="UniProtKB-UniRule"/>
</dbReference>
<dbReference type="GO" id="GO:0009088">
    <property type="term" value="P:threonine biosynthetic process"/>
    <property type="evidence" value="ECO:0007669"/>
    <property type="project" value="UniProtKB-UniRule"/>
</dbReference>
<dbReference type="FunFam" id="3.30.230.10:FF:000020">
    <property type="entry name" value="Homoserine kinase"/>
    <property type="match status" value="1"/>
</dbReference>
<dbReference type="FunFam" id="3.30.70.890:FF:000002">
    <property type="entry name" value="Homoserine kinase"/>
    <property type="match status" value="1"/>
</dbReference>
<dbReference type="Gene3D" id="3.30.230.10">
    <property type="match status" value="1"/>
</dbReference>
<dbReference type="Gene3D" id="3.30.70.890">
    <property type="entry name" value="GHMP kinase, C-terminal domain"/>
    <property type="match status" value="1"/>
</dbReference>
<dbReference type="HAMAP" id="MF_00384">
    <property type="entry name" value="Homoser_kinase"/>
    <property type="match status" value="1"/>
</dbReference>
<dbReference type="InterPro" id="IPR013750">
    <property type="entry name" value="GHMP_kinase_C_dom"/>
</dbReference>
<dbReference type="InterPro" id="IPR036554">
    <property type="entry name" value="GHMP_kinase_C_sf"/>
</dbReference>
<dbReference type="InterPro" id="IPR006204">
    <property type="entry name" value="GHMP_kinase_N_dom"/>
</dbReference>
<dbReference type="InterPro" id="IPR006203">
    <property type="entry name" value="GHMP_knse_ATP-bd_CS"/>
</dbReference>
<dbReference type="InterPro" id="IPR000870">
    <property type="entry name" value="Homoserine_kinase"/>
</dbReference>
<dbReference type="InterPro" id="IPR020568">
    <property type="entry name" value="Ribosomal_Su5_D2-typ_SF"/>
</dbReference>
<dbReference type="InterPro" id="IPR014721">
    <property type="entry name" value="Ribsml_uS5_D2-typ_fold_subgr"/>
</dbReference>
<dbReference type="NCBIfam" id="NF002288">
    <property type="entry name" value="PRK01212.1-4"/>
    <property type="match status" value="1"/>
</dbReference>
<dbReference type="NCBIfam" id="TIGR00191">
    <property type="entry name" value="thrB"/>
    <property type="match status" value="1"/>
</dbReference>
<dbReference type="PANTHER" id="PTHR20861:SF1">
    <property type="entry name" value="HOMOSERINE KINASE"/>
    <property type="match status" value="1"/>
</dbReference>
<dbReference type="PANTHER" id="PTHR20861">
    <property type="entry name" value="HOMOSERINE/4-DIPHOSPHOCYTIDYL-2-C-METHYL-D-ERYTHRITOL KINASE"/>
    <property type="match status" value="1"/>
</dbReference>
<dbReference type="Pfam" id="PF08544">
    <property type="entry name" value="GHMP_kinases_C"/>
    <property type="match status" value="1"/>
</dbReference>
<dbReference type="Pfam" id="PF00288">
    <property type="entry name" value="GHMP_kinases_N"/>
    <property type="match status" value="1"/>
</dbReference>
<dbReference type="PIRSF" id="PIRSF000676">
    <property type="entry name" value="Homoser_kin"/>
    <property type="match status" value="1"/>
</dbReference>
<dbReference type="PRINTS" id="PR00958">
    <property type="entry name" value="HOMSERKINASE"/>
</dbReference>
<dbReference type="SUPFAM" id="SSF55060">
    <property type="entry name" value="GHMP Kinase, C-terminal domain"/>
    <property type="match status" value="1"/>
</dbReference>
<dbReference type="SUPFAM" id="SSF54211">
    <property type="entry name" value="Ribosomal protein S5 domain 2-like"/>
    <property type="match status" value="1"/>
</dbReference>
<dbReference type="PROSITE" id="PS00627">
    <property type="entry name" value="GHMP_KINASES_ATP"/>
    <property type="match status" value="1"/>
</dbReference>
<organism>
    <name type="scientific">Escherichia coli O17:K52:H18 (strain UMN026 / ExPEC)</name>
    <dbReference type="NCBI Taxonomy" id="585056"/>
    <lineage>
        <taxon>Bacteria</taxon>
        <taxon>Pseudomonadati</taxon>
        <taxon>Pseudomonadota</taxon>
        <taxon>Gammaproteobacteria</taxon>
        <taxon>Enterobacterales</taxon>
        <taxon>Enterobacteriaceae</taxon>
        <taxon>Escherichia</taxon>
    </lineage>
</organism>
<comment type="function">
    <text evidence="1">Catalyzes the ATP-dependent phosphorylation of L-homoserine to L-homoserine phosphate.</text>
</comment>
<comment type="catalytic activity">
    <reaction evidence="1">
        <text>L-homoserine + ATP = O-phospho-L-homoserine + ADP + H(+)</text>
        <dbReference type="Rhea" id="RHEA:13985"/>
        <dbReference type="ChEBI" id="CHEBI:15378"/>
        <dbReference type="ChEBI" id="CHEBI:30616"/>
        <dbReference type="ChEBI" id="CHEBI:57476"/>
        <dbReference type="ChEBI" id="CHEBI:57590"/>
        <dbReference type="ChEBI" id="CHEBI:456216"/>
        <dbReference type="EC" id="2.7.1.39"/>
    </reaction>
</comment>
<comment type="pathway">
    <text evidence="1">Amino-acid biosynthesis; L-threonine biosynthesis; L-threonine from L-aspartate: step 4/5.</text>
</comment>
<comment type="subcellular location">
    <subcellularLocation>
        <location evidence="1">Cytoplasm</location>
    </subcellularLocation>
</comment>
<comment type="similarity">
    <text evidence="1">Belongs to the GHMP kinase family. Homoserine kinase subfamily.</text>
</comment>